<organism>
    <name type="scientific">Shigella flexneri</name>
    <dbReference type="NCBI Taxonomy" id="623"/>
    <lineage>
        <taxon>Bacteria</taxon>
        <taxon>Pseudomonadati</taxon>
        <taxon>Pseudomonadota</taxon>
        <taxon>Gammaproteobacteria</taxon>
        <taxon>Enterobacterales</taxon>
        <taxon>Enterobacteriaceae</taxon>
        <taxon>Shigella</taxon>
    </lineage>
</organism>
<accession>Q7UC29</accession>
<reference key="1">
    <citation type="journal article" date="2002" name="Nucleic Acids Res.">
        <title>Genome sequence of Shigella flexneri 2a: insights into pathogenicity through comparison with genomes of Escherichia coli K12 and O157.</title>
        <authorList>
            <person name="Jin Q."/>
            <person name="Yuan Z."/>
            <person name="Xu J."/>
            <person name="Wang Y."/>
            <person name="Shen Y."/>
            <person name="Lu W."/>
            <person name="Wang J."/>
            <person name="Liu H."/>
            <person name="Yang J."/>
            <person name="Yang F."/>
            <person name="Zhang X."/>
            <person name="Zhang J."/>
            <person name="Yang G."/>
            <person name="Wu H."/>
            <person name="Qu D."/>
            <person name="Dong J."/>
            <person name="Sun L."/>
            <person name="Xue Y."/>
            <person name="Zhao A."/>
            <person name="Gao Y."/>
            <person name="Zhu J."/>
            <person name="Kan B."/>
            <person name="Ding K."/>
            <person name="Chen S."/>
            <person name="Cheng H."/>
            <person name="Yao Z."/>
            <person name="He B."/>
            <person name="Chen R."/>
            <person name="Ma D."/>
            <person name="Qiang B."/>
            <person name="Wen Y."/>
            <person name="Hou Y."/>
            <person name="Yu J."/>
        </authorList>
    </citation>
    <scope>NUCLEOTIDE SEQUENCE [LARGE SCALE GENOMIC DNA]</scope>
    <source>
        <strain>301 / Serotype 2a</strain>
    </source>
</reference>
<reference key="2">
    <citation type="journal article" date="2003" name="Infect. Immun.">
        <title>Complete genome sequence and comparative genomics of Shigella flexneri serotype 2a strain 2457T.</title>
        <authorList>
            <person name="Wei J."/>
            <person name="Goldberg M.B."/>
            <person name="Burland V."/>
            <person name="Venkatesan M.M."/>
            <person name="Deng W."/>
            <person name="Fournier G."/>
            <person name="Mayhew G.F."/>
            <person name="Plunkett G. III"/>
            <person name="Rose D.J."/>
            <person name="Darling A."/>
            <person name="Mau B."/>
            <person name="Perna N.T."/>
            <person name="Payne S.M."/>
            <person name="Runyen-Janecky L.J."/>
            <person name="Zhou S."/>
            <person name="Schwartz D.C."/>
            <person name="Blattner F.R."/>
        </authorList>
    </citation>
    <scope>NUCLEOTIDE SEQUENCE [LARGE SCALE GENOMIC DNA]</scope>
    <source>
        <strain>ATCC 700930 / 2457T / Serotype 2a</strain>
    </source>
</reference>
<gene>
    <name evidence="1" type="primary">cysA</name>
    <name type="ordered locus">SF2476.1</name>
    <name type="ordered locus">S2623</name>
</gene>
<sequence length="365" mass="41069">MSIEIANIKKSFGRTQVLNDISLDIPSGQMVALLGPSGSGKTTLLRIIAGLEHQTSGHIRFHGTDVSRLHARDRKVGFVFQHYALFRHMTVFDNITFGLTVLPRRERPNAAAIKAKVTKLLEMVQLAHLADRYPAQLSGGQKQRVALARALAVEPQILLLDEPFGALDAQVRKELRRWLRQLHEELKFTSVFVTHDQEEATEVADRVVVMSQGNIEQADAPNQVWREPATRFVLEFMGEVNRLQGTIRGGQFHVGAHRWPLGYTPAYQGPVDLFLRPWEVDISRRTSLDSPLPVQVLEASPKGHYTQLVVQPLGWYNEPLTVVMHGDDAPQHGERLFVGLQHARLYNGDERIETRDEELALAQSA</sequence>
<dbReference type="EC" id="7.3.2.3" evidence="1"/>
<dbReference type="EMBL" id="AE005674">
    <property type="status" value="NOT_ANNOTATED_CDS"/>
    <property type="molecule type" value="Genomic_DNA"/>
</dbReference>
<dbReference type="EMBL" id="AE014073">
    <property type="protein sequence ID" value="AAP17796.1"/>
    <property type="molecule type" value="Genomic_DNA"/>
</dbReference>
<dbReference type="RefSeq" id="WP_000021053.1">
    <property type="nucleotide sequence ID" value="NZ_WPGW01000057.1"/>
</dbReference>
<dbReference type="SMR" id="Q7UC29"/>
<dbReference type="KEGG" id="sfx:S2623"/>
<dbReference type="PATRIC" id="fig|623.156.peg.4354"/>
<dbReference type="HOGENOM" id="CLU_000604_1_1_6"/>
<dbReference type="Proteomes" id="UP000001006">
    <property type="component" value="Chromosome"/>
</dbReference>
<dbReference type="Proteomes" id="UP000002673">
    <property type="component" value="Chromosome"/>
</dbReference>
<dbReference type="GO" id="GO:0043190">
    <property type="term" value="C:ATP-binding cassette (ABC) transporter complex"/>
    <property type="evidence" value="ECO:0007669"/>
    <property type="project" value="InterPro"/>
</dbReference>
<dbReference type="GO" id="GO:0015419">
    <property type="term" value="F:ABC-type sulfate transporter activity"/>
    <property type="evidence" value="ECO:0007669"/>
    <property type="project" value="InterPro"/>
</dbReference>
<dbReference type="GO" id="GO:0102025">
    <property type="term" value="F:ABC-type thiosulfate transporter activity"/>
    <property type="evidence" value="ECO:0007669"/>
    <property type="project" value="RHEA"/>
</dbReference>
<dbReference type="GO" id="GO:0005524">
    <property type="term" value="F:ATP binding"/>
    <property type="evidence" value="ECO:0007669"/>
    <property type="project" value="UniProtKB-KW"/>
</dbReference>
<dbReference type="GO" id="GO:0016887">
    <property type="term" value="F:ATP hydrolysis activity"/>
    <property type="evidence" value="ECO:0007669"/>
    <property type="project" value="InterPro"/>
</dbReference>
<dbReference type="CDD" id="cd03296">
    <property type="entry name" value="ABC_CysA_sulfate_importer"/>
    <property type="match status" value="1"/>
</dbReference>
<dbReference type="FunFam" id="3.40.50.300:FF:000227">
    <property type="entry name" value="Sulfate/thiosulfate import ATP-binding protein CysA"/>
    <property type="match status" value="1"/>
</dbReference>
<dbReference type="Gene3D" id="3.40.50.300">
    <property type="entry name" value="P-loop containing nucleotide triphosphate hydrolases"/>
    <property type="match status" value="1"/>
</dbReference>
<dbReference type="InterPro" id="IPR003593">
    <property type="entry name" value="AAA+_ATPase"/>
</dbReference>
<dbReference type="InterPro" id="IPR050093">
    <property type="entry name" value="ABC_SmlMolc_Importer"/>
</dbReference>
<dbReference type="InterPro" id="IPR003439">
    <property type="entry name" value="ABC_transporter-like_ATP-bd"/>
</dbReference>
<dbReference type="InterPro" id="IPR017871">
    <property type="entry name" value="ABC_transporter-like_CS"/>
</dbReference>
<dbReference type="InterPro" id="IPR008995">
    <property type="entry name" value="Mo/tungstate-bd_C_term_dom"/>
</dbReference>
<dbReference type="InterPro" id="IPR027417">
    <property type="entry name" value="P-loop_NTPase"/>
</dbReference>
<dbReference type="InterPro" id="IPR005666">
    <property type="entry name" value="Sulph_transpt1"/>
</dbReference>
<dbReference type="NCBIfam" id="TIGR00968">
    <property type="entry name" value="3a0106s01"/>
    <property type="match status" value="1"/>
</dbReference>
<dbReference type="NCBIfam" id="NF008105">
    <property type="entry name" value="PRK10851.1"/>
    <property type="match status" value="1"/>
</dbReference>
<dbReference type="PANTHER" id="PTHR42781">
    <property type="entry name" value="SPERMIDINE/PUTRESCINE IMPORT ATP-BINDING PROTEIN POTA"/>
    <property type="match status" value="1"/>
</dbReference>
<dbReference type="PANTHER" id="PTHR42781:SF4">
    <property type="entry name" value="SPERMIDINE_PUTRESCINE IMPORT ATP-BINDING PROTEIN POTA"/>
    <property type="match status" value="1"/>
</dbReference>
<dbReference type="Pfam" id="PF00005">
    <property type="entry name" value="ABC_tran"/>
    <property type="match status" value="1"/>
</dbReference>
<dbReference type="SMART" id="SM00382">
    <property type="entry name" value="AAA"/>
    <property type="match status" value="1"/>
</dbReference>
<dbReference type="SUPFAM" id="SSF50331">
    <property type="entry name" value="MOP-like"/>
    <property type="match status" value="1"/>
</dbReference>
<dbReference type="SUPFAM" id="SSF52540">
    <property type="entry name" value="P-loop containing nucleoside triphosphate hydrolases"/>
    <property type="match status" value="1"/>
</dbReference>
<dbReference type="PROSITE" id="PS00211">
    <property type="entry name" value="ABC_TRANSPORTER_1"/>
    <property type="match status" value="1"/>
</dbReference>
<dbReference type="PROSITE" id="PS50893">
    <property type="entry name" value="ABC_TRANSPORTER_2"/>
    <property type="match status" value="1"/>
</dbReference>
<dbReference type="PROSITE" id="PS51237">
    <property type="entry name" value="CYSA"/>
    <property type="match status" value="1"/>
</dbReference>
<feature type="chain" id="PRO_0000092294" description="Sulfate/thiosulfate import ATP-binding protein CysA">
    <location>
        <begin position="1"/>
        <end position="365"/>
    </location>
</feature>
<feature type="domain" description="ABC transporter" evidence="1">
    <location>
        <begin position="3"/>
        <end position="237"/>
    </location>
</feature>
<feature type="binding site" evidence="1">
    <location>
        <begin position="35"/>
        <end position="42"/>
    </location>
    <ligand>
        <name>ATP</name>
        <dbReference type="ChEBI" id="CHEBI:30616"/>
    </ligand>
</feature>
<evidence type="ECO:0000255" key="1">
    <source>
        <dbReference type="HAMAP-Rule" id="MF_01701"/>
    </source>
</evidence>
<protein>
    <recommendedName>
        <fullName evidence="1">Sulfate/thiosulfate import ATP-binding protein CysA</fullName>
        <ecNumber evidence="1">7.3.2.3</ecNumber>
    </recommendedName>
    <alternativeName>
        <fullName evidence="1">Sulfate-transporting ATPase</fullName>
    </alternativeName>
</protein>
<keyword id="KW-0067">ATP-binding</keyword>
<keyword id="KW-0997">Cell inner membrane</keyword>
<keyword id="KW-1003">Cell membrane</keyword>
<keyword id="KW-0472">Membrane</keyword>
<keyword id="KW-0547">Nucleotide-binding</keyword>
<keyword id="KW-1185">Reference proteome</keyword>
<keyword id="KW-0764">Sulfate transport</keyword>
<keyword id="KW-1278">Translocase</keyword>
<keyword id="KW-0813">Transport</keyword>
<proteinExistence type="inferred from homology"/>
<comment type="function">
    <text evidence="1">Part of the ABC transporter complex CysAWTP involved in sulfate/thiosulfate import. Responsible for energy coupling to the transport system.</text>
</comment>
<comment type="catalytic activity">
    <reaction evidence="1">
        <text>sulfate(out) + ATP + H2O = sulfate(in) + ADP + phosphate + H(+)</text>
        <dbReference type="Rhea" id="RHEA:10192"/>
        <dbReference type="ChEBI" id="CHEBI:15377"/>
        <dbReference type="ChEBI" id="CHEBI:15378"/>
        <dbReference type="ChEBI" id="CHEBI:16189"/>
        <dbReference type="ChEBI" id="CHEBI:30616"/>
        <dbReference type="ChEBI" id="CHEBI:43474"/>
        <dbReference type="ChEBI" id="CHEBI:456216"/>
        <dbReference type="EC" id="7.3.2.3"/>
    </reaction>
</comment>
<comment type="catalytic activity">
    <reaction evidence="1">
        <text>thiosulfate(out) + ATP + H2O = thiosulfate(in) + ADP + phosphate + H(+)</text>
        <dbReference type="Rhea" id="RHEA:29871"/>
        <dbReference type="ChEBI" id="CHEBI:15377"/>
        <dbReference type="ChEBI" id="CHEBI:15378"/>
        <dbReference type="ChEBI" id="CHEBI:30616"/>
        <dbReference type="ChEBI" id="CHEBI:33542"/>
        <dbReference type="ChEBI" id="CHEBI:43474"/>
        <dbReference type="ChEBI" id="CHEBI:456216"/>
        <dbReference type="EC" id="7.3.2.3"/>
    </reaction>
</comment>
<comment type="subunit">
    <text evidence="1">The complex is composed of two ATP-binding proteins (CysA), two transmembrane proteins (CysT and CysW) and a solute-binding protein (CysP).</text>
</comment>
<comment type="subcellular location">
    <subcellularLocation>
        <location evidence="1">Cell inner membrane</location>
        <topology evidence="1">Peripheral membrane protein</topology>
    </subcellularLocation>
</comment>
<comment type="similarity">
    <text evidence="1">Belongs to the ABC transporter superfamily. Sulfate/tungstate importer (TC 3.A.1.6) family.</text>
</comment>
<name>CYSA_SHIFL</name>